<feature type="chain" id="PRO_0000179912" description="2,3-bisphosphoglycerate-dependent phosphoglycerate mutase">
    <location>
        <begin position="1"/>
        <end position="228"/>
    </location>
</feature>
<feature type="active site" description="Tele-phosphohistidine intermediate" evidence="1">
    <location>
        <position position="9"/>
    </location>
</feature>
<feature type="active site" description="Proton donor/acceptor" evidence="1">
    <location>
        <position position="87"/>
    </location>
</feature>
<feature type="binding site" evidence="1">
    <location>
        <begin position="8"/>
        <end position="15"/>
    </location>
    <ligand>
        <name>substrate</name>
    </ligand>
</feature>
<feature type="binding site" evidence="1">
    <location>
        <begin position="21"/>
        <end position="22"/>
    </location>
    <ligand>
        <name>substrate</name>
    </ligand>
</feature>
<feature type="binding site" evidence="1">
    <location>
        <position position="60"/>
    </location>
    <ligand>
        <name>substrate</name>
    </ligand>
</feature>
<feature type="binding site" evidence="1">
    <location>
        <begin position="87"/>
        <end position="90"/>
    </location>
    <ligand>
        <name>substrate</name>
    </ligand>
</feature>
<feature type="binding site" evidence="1">
    <location>
        <position position="98"/>
    </location>
    <ligand>
        <name>substrate</name>
    </ligand>
</feature>
<feature type="binding site" evidence="1">
    <location>
        <begin position="114"/>
        <end position="115"/>
    </location>
    <ligand>
        <name>substrate</name>
    </ligand>
</feature>
<feature type="binding site" evidence="1">
    <location>
        <begin position="183"/>
        <end position="184"/>
    </location>
    <ligand>
        <name>substrate</name>
    </ligand>
</feature>
<feature type="site" description="Transition state stabilizer" evidence="1">
    <location>
        <position position="182"/>
    </location>
</feature>
<proteinExistence type="evidence at protein level"/>
<name>GPMA_STAAN</name>
<comment type="function">
    <text evidence="1">Catalyzes the interconversion of 2-phosphoglycerate and 3-phosphoglycerate.</text>
</comment>
<comment type="catalytic activity">
    <reaction evidence="1">
        <text>(2R)-2-phosphoglycerate = (2R)-3-phosphoglycerate</text>
        <dbReference type="Rhea" id="RHEA:15901"/>
        <dbReference type="ChEBI" id="CHEBI:58272"/>
        <dbReference type="ChEBI" id="CHEBI:58289"/>
        <dbReference type="EC" id="5.4.2.11"/>
    </reaction>
</comment>
<comment type="pathway">
    <text evidence="1">Carbohydrate degradation; glycolysis; pyruvate from D-glyceraldehyde 3-phosphate: step 3/5.</text>
</comment>
<comment type="similarity">
    <text evidence="1">Belongs to the phosphoglycerate mutase family. BPG-dependent PGAM subfamily.</text>
</comment>
<organism>
    <name type="scientific">Staphylococcus aureus (strain N315)</name>
    <dbReference type="NCBI Taxonomy" id="158879"/>
    <lineage>
        <taxon>Bacteria</taxon>
        <taxon>Bacillati</taxon>
        <taxon>Bacillota</taxon>
        <taxon>Bacilli</taxon>
        <taxon>Bacillales</taxon>
        <taxon>Staphylococcaceae</taxon>
        <taxon>Staphylococcus</taxon>
    </lineage>
</organism>
<evidence type="ECO:0000255" key="1">
    <source>
        <dbReference type="HAMAP-Rule" id="MF_01039"/>
    </source>
</evidence>
<gene>
    <name evidence="1" type="primary">gpmA</name>
    <name type="ordered locus">SA2204</name>
</gene>
<dbReference type="EC" id="5.4.2.11" evidence="1"/>
<dbReference type="EMBL" id="BA000018">
    <property type="protein sequence ID" value="BAB43506.1"/>
    <property type="molecule type" value="Genomic_DNA"/>
</dbReference>
<dbReference type="PIR" id="A90043">
    <property type="entry name" value="A90043"/>
</dbReference>
<dbReference type="RefSeq" id="WP_001125208.1">
    <property type="nucleotide sequence ID" value="NC_002745.2"/>
</dbReference>
<dbReference type="SMR" id="P99153"/>
<dbReference type="EnsemblBacteria" id="BAB43506">
    <property type="protein sequence ID" value="BAB43506"/>
    <property type="gene ID" value="BAB43506"/>
</dbReference>
<dbReference type="KEGG" id="sau:SA2204"/>
<dbReference type="HOGENOM" id="CLU_033323_1_5_9"/>
<dbReference type="UniPathway" id="UPA00109">
    <property type="reaction ID" value="UER00186"/>
</dbReference>
<dbReference type="GO" id="GO:0004619">
    <property type="term" value="F:phosphoglycerate mutase activity"/>
    <property type="evidence" value="ECO:0007669"/>
    <property type="project" value="UniProtKB-EC"/>
</dbReference>
<dbReference type="GO" id="GO:0006094">
    <property type="term" value="P:gluconeogenesis"/>
    <property type="evidence" value="ECO:0007669"/>
    <property type="project" value="UniProtKB-UniRule"/>
</dbReference>
<dbReference type="GO" id="GO:0006096">
    <property type="term" value="P:glycolytic process"/>
    <property type="evidence" value="ECO:0007669"/>
    <property type="project" value="UniProtKB-UniRule"/>
</dbReference>
<dbReference type="CDD" id="cd07067">
    <property type="entry name" value="HP_PGM_like"/>
    <property type="match status" value="1"/>
</dbReference>
<dbReference type="FunFam" id="3.40.50.1240:FF:000003">
    <property type="entry name" value="2,3-bisphosphoglycerate-dependent phosphoglycerate mutase"/>
    <property type="match status" value="1"/>
</dbReference>
<dbReference type="Gene3D" id="3.40.50.1240">
    <property type="entry name" value="Phosphoglycerate mutase-like"/>
    <property type="match status" value="1"/>
</dbReference>
<dbReference type="HAMAP" id="MF_01039">
    <property type="entry name" value="PGAM_GpmA"/>
    <property type="match status" value="1"/>
</dbReference>
<dbReference type="InterPro" id="IPR013078">
    <property type="entry name" value="His_Pase_superF_clade-1"/>
</dbReference>
<dbReference type="InterPro" id="IPR029033">
    <property type="entry name" value="His_PPase_superfam"/>
</dbReference>
<dbReference type="InterPro" id="IPR001345">
    <property type="entry name" value="PG/BPGM_mutase_AS"/>
</dbReference>
<dbReference type="InterPro" id="IPR005952">
    <property type="entry name" value="Phosphogly_mut1"/>
</dbReference>
<dbReference type="NCBIfam" id="TIGR01258">
    <property type="entry name" value="pgm_1"/>
    <property type="match status" value="1"/>
</dbReference>
<dbReference type="NCBIfam" id="NF010713">
    <property type="entry name" value="PRK14115.1"/>
    <property type="match status" value="1"/>
</dbReference>
<dbReference type="NCBIfam" id="NF010717">
    <property type="entry name" value="PRK14119.1"/>
    <property type="match status" value="1"/>
</dbReference>
<dbReference type="PANTHER" id="PTHR11931">
    <property type="entry name" value="PHOSPHOGLYCERATE MUTASE"/>
    <property type="match status" value="1"/>
</dbReference>
<dbReference type="Pfam" id="PF00300">
    <property type="entry name" value="His_Phos_1"/>
    <property type="match status" value="1"/>
</dbReference>
<dbReference type="PIRSF" id="PIRSF000709">
    <property type="entry name" value="6PFK_2-Ptase"/>
    <property type="match status" value="1"/>
</dbReference>
<dbReference type="SMART" id="SM00855">
    <property type="entry name" value="PGAM"/>
    <property type="match status" value="1"/>
</dbReference>
<dbReference type="SUPFAM" id="SSF53254">
    <property type="entry name" value="Phosphoglycerate mutase-like"/>
    <property type="match status" value="1"/>
</dbReference>
<dbReference type="PROSITE" id="PS00175">
    <property type="entry name" value="PG_MUTASE"/>
    <property type="match status" value="1"/>
</dbReference>
<protein>
    <recommendedName>
        <fullName evidence="1">2,3-bisphosphoglycerate-dependent phosphoglycerate mutase</fullName>
        <shortName evidence="1">BPG-dependent PGAM</shortName>
        <shortName evidence="1">PGAM</shortName>
        <shortName evidence="1">Phosphoglyceromutase</shortName>
        <shortName evidence="1">dPGM</shortName>
        <ecNumber evidence="1">5.4.2.11</ecNumber>
    </recommendedName>
</protein>
<accession>P99153</accession>
<accession>Q99RL4</accession>
<reference key="1">
    <citation type="journal article" date="2001" name="Lancet">
        <title>Whole genome sequencing of meticillin-resistant Staphylococcus aureus.</title>
        <authorList>
            <person name="Kuroda M."/>
            <person name="Ohta T."/>
            <person name="Uchiyama I."/>
            <person name="Baba T."/>
            <person name="Yuzawa H."/>
            <person name="Kobayashi I."/>
            <person name="Cui L."/>
            <person name="Oguchi A."/>
            <person name="Aoki K."/>
            <person name="Nagai Y."/>
            <person name="Lian J.-Q."/>
            <person name="Ito T."/>
            <person name="Kanamori M."/>
            <person name="Matsumaru H."/>
            <person name="Maruyama A."/>
            <person name="Murakami H."/>
            <person name="Hosoyama A."/>
            <person name="Mizutani-Ui Y."/>
            <person name="Takahashi N.K."/>
            <person name="Sawano T."/>
            <person name="Inoue R."/>
            <person name="Kaito C."/>
            <person name="Sekimizu K."/>
            <person name="Hirakawa H."/>
            <person name="Kuhara S."/>
            <person name="Goto S."/>
            <person name="Yabuzaki J."/>
            <person name="Kanehisa M."/>
            <person name="Yamashita A."/>
            <person name="Oshima K."/>
            <person name="Furuya K."/>
            <person name="Yoshino C."/>
            <person name="Shiba T."/>
            <person name="Hattori M."/>
            <person name="Ogasawara N."/>
            <person name="Hayashi H."/>
            <person name="Hiramatsu K."/>
        </authorList>
    </citation>
    <scope>NUCLEOTIDE SEQUENCE [LARGE SCALE GENOMIC DNA]</scope>
    <source>
        <strain>N315</strain>
    </source>
</reference>
<reference key="2">
    <citation type="journal article" date="2005" name="J. Microbiol. Methods">
        <title>Correlation of proteomic and transcriptomic profiles of Staphylococcus aureus during the post-exponential phase of growth.</title>
        <authorList>
            <person name="Scherl A."/>
            <person name="Francois P."/>
            <person name="Bento M."/>
            <person name="Deshusses J.M."/>
            <person name="Charbonnier Y."/>
            <person name="Converset V."/>
            <person name="Huyghe A."/>
            <person name="Walter N."/>
            <person name="Hoogland C."/>
            <person name="Appel R.D."/>
            <person name="Sanchez J.-C."/>
            <person name="Zimmermann-Ivol C.G."/>
            <person name="Corthals G.L."/>
            <person name="Hochstrasser D.F."/>
            <person name="Schrenzel J."/>
        </authorList>
    </citation>
    <scope>IDENTIFICATION BY MASS SPECTROMETRY</scope>
    <source>
        <strain>N315</strain>
    </source>
</reference>
<reference key="3">
    <citation type="submission" date="2007-10" db="UniProtKB">
        <title>Shotgun proteomic analysis of total and membrane protein extracts of S. aureus strain N315.</title>
        <authorList>
            <person name="Vaezzadeh A.R."/>
            <person name="Deshusses J."/>
            <person name="Lescuyer P."/>
            <person name="Hochstrasser D.F."/>
        </authorList>
    </citation>
    <scope>IDENTIFICATION BY MASS SPECTROMETRY [LARGE SCALE ANALYSIS]</scope>
    <source>
        <strain>N315</strain>
    </source>
</reference>
<sequence length="228" mass="26680">MPKLILCRHGQSEWNAKNLFTGWEDVNLSEQGINEATRAGEKVRENNIAIDVAFTSLLTRALDTTHYILTESKQQWIPVYKSWRLNERHYGGLQGLNKDDARKEFGEEQVHIWRRSYDVKPPAETEEQREAYLADRRYNHLDKRMMPYSESLKDTLVRVIPFWTDHISQYLLDGQTVLVSAHGNSIRALIKYLEDVSDEDIINYEIKTGAPLVYELTDDLEVIDKYYL</sequence>
<keyword id="KW-0312">Gluconeogenesis</keyword>
<keyword id="KW-0324">Glycolysis</keyword>
<keyword id="KW-0413">Isomerase</keyword>